<organism>
    <name type="scientific">Lachnoclostridium phytofermentans (strain ATCC 700394 / DSM 18823 / ISDg)</name>
    <name type="common">Clostridium phytofermentans</name>
    <dbReference type="NCBI Taxonomy" id="357809"/>
    <lineage>
        <taxon>Bacteria</taxon>
        <taxon>Bacillati</taxon>
        <taxon>Bacillota</taxon>
        <taxon>Clostridia</taxon>
        <taxon>Lachnospirales</taxon>
        <taxon>Lachnospiraceae</taxon>
    </lineage>
</organism>
<dbReference type="EC" id="4.1.1.48" evidence="1"/>
<dbReference type="EMBL" id="CP000885">
    <property type="protein sequence ID" value="ABX44192.1"/>
    <property type="molecule type" value="Genomic_DNA"/>
</dbReference>
<dbReference type="RefSeq" id="WP_012201840.1">
    <property type="nucleotide sequence ID" value="NC_010001.1"/>
</dbReference>
<dbReference type="SMR" id="A9KL43"/>
<dbReference type="STRING" id="357809.Cphy_3845"/>
<dbReference type="KEGG" id="cpy:Cphy_3845"/>
<dbReference type="eggNOG" id="COG0134">
    <property type="taxonomic scope" value="Bacteria"/>
</dbReference>
<dbReference type="HOGENOM" id="CLU_034247_2_0_9"/>
<dbReference type="OrthoDB" id="9804217at2"/>
<dbReference type="UniPathway" id="UPA00035">
    <property type="reaction ID" value="UER00043"/>
</dbReference>
<dbReference type="Proteomes" id="UP000000370">
    <property type="component" value="Chromosome"/>
</dbReference>
<dbReference type="GO" id="GO:0004425">
    <property type="term" value="F:indole-3-glycerol-phosphate synthase activity"/>
    <property type="evidence" value="ECO:0007669"/>
    <property type="project" value="UniProtKB-UniRule"/>
</dbReference>
<dbReference type="GO" id="GO:0004640">
    <property type="term" value="F:phosphoribosylanthranilate isomerase activity"/>
    <property type="evidence" value="ECO:0007669"/>
    <property type="project" value="TreeGrafter"/>
</dbReference>
<dbReference type="GO" id="GO:0000162">
    <property type="term" value="P:L-tryptophan biosynthetic process"/>
    <property type="evidence" value="ECO:0007669"/>
    <property type="project" value="UniProtKB-UniRule"/>
</dbReference>
<dbReference type="CDD" id="cd00331">
    <property type="entry name" value="IGPS"/>
    <property type="match status" value="1"/>
</dbReference>
<dbReference type="FunFam" id="3.20.20.70:FF:000024">
    <property type="entry name" value="Indole-3-glycerol phosphate synthase"/>
    <property type="match status" value="1"/>
</dbReference>
<dbReference type="Gene3D" id="3.20.20.70">
    <property type="entry name" value="Aldolase class I"/>
    <property type="match status" value="1"/>
</dbReference>
<dbReference type="HAMAP" id="MF_00134_A">
    <property type="entry name" value="IGPS_A"/>
    <property type="match status" value="1"/>
</dbReference>
<dbReference type="HAMAP" id="MF_00134_B">
    <property type="entry name" value="IGPS_B"/>
    <property type="match status" value="1"/>
</dbReference>
<dbReference type="InterPro" id="IPR013785">
    <property type="entry name" value="Aldolase_TIM"/>
</dbReference>
<dbReference type="InterPro" id="IPR045186">
    <property type="entry name" value="Indole-3-glycerol_P_synth"/>
</dbReference>
<dbReference type="InterPro" id="IPR013798">
    <property type="entry name" value="Indole-3-glycerol_P_synth_dom"/>
</dbReference>
<dbReference type="InterPro" id="IPR001468">
    <property type="entry name" value="Indole-3-GlycerolPSynthase_CS"/>
</dbReference>
<dbReference type="InterPro" id="IPR011060">
    <property type="entry name" value="RibuloseP-bd_barrel"/>
</dbReference>
<dbReference type="NCBIfam" id="NF001377">
    <property type="entry name" value="PRK00278.2-4"/>
    <property type="match status" value="1"/>
</dbReference>
<dbReference type="PANTHER" id="PTHR22854:SF2">
    <property type="entry name" value="INDOLE-3-GLYCEROL-PHOSPHATE SYNTHASE"/>
    <property type="match status" value="1"/>
</dbReference>
<dbReference type="PANTHER" id="PTHR22854">
    <property type="entry name" value="TRYPTOPHAN BIOSYNTHESIS PROTEIN"/>
    <property type="match status" value="1"/>
</dbReference>
<dbReference type="Pfam" id="PF00218">
    <property type="entry name" value="IGPS"/>
    <property type="match status" value="1"/>
</dbReference>
<dbReference type="SUPFAM" id="SSF51366">
    <property type="entry name" value="Ribulose-phoshate binding barrel"/>
    <property type="match status" value="1"/>
</dbReference>
<dbReference type="PROSITE" id="PS00614">
    <property type="entry name" value="IGPS"/>
    <property type="match status" value="1"/>
</dbReference>
<protein>
    <recommendedName>
        <fullName evidence="1">Indole-3-glycerol phosphate synthase</fullName>
        <shortName evidence="1">IGPS</shortName>
        <ecNumber evidence="1">4.1.1.48</ecNumber>
    </recommendedName>
</protein>
<sequence>MILEKIVETTKDRINQEKRRLPEEVIKKSATEMAIKQGFGSSSSISRDKFFFEEVMSRPGVNFLCEIKRASPSKGMIAKDFDPVFIAKEYEEGGAAAISVLTEPTFFLGKDDYLMEVKKEVGIPVLRKDFILEAYQIYQAKLLGADCVLLIVSILTEEQLTGFLKICDELGLSALVETHNQEEVMRALQCGARIIGVNNRNLSTFEVSIENSLKLRTLVPKEAIFIAESGISTPEQIKELKEAGVNGVLIGETLMKASNKKLMIRNLKSLL</sequence>
<comment type="catalytic activity">
    <reaction evidence="1">
        <text>1-(2-carboxyphenylamino)-1-deoxy-D-ribulose 5-phosphate + H(+) = (1S,2R)-1-C-(indol-3-yl)glycerol 3-phosphate + CO2 + H2O</text>
        <dbReference type="Rhea" id="RHEA:23476"/>
        <dbReference type="ChEBI" id="CHEBI:15377"/>
        <dbReference type="ChEBI" id="CHEBI:15378"/>
        <dbReference type="ChEBI" id="CHEBI:16526"/>
        <dbReference type="ChEBI" id="CHEBI:58613"/>
        <dbReference type="ChEBI" id="CHEBI:58866"/>
        <dbReference type="EC" id="4.1.1.48"/>
    </reaction>
</comment>
<comment type="pathway">
    <text evidence="1">Amino-acid biosynthesis; L-tryptophan biosynthesis; L-tryptophan from chorismate: step 4/5.</text>
</comment>
<comment type="similarity">
    <text evidence="1">Belongs to the TrpC family.</text>
</comment>
<evidence type="ECO:0000255" key="1">
    <source>
        <dbReference type="HAMAP-Rule" id="MF_00134"/>
    </source>
</evidence>
<keyword id="KW-0028">Amino-acid biosynthesis</keyword>
<keyword id="KW-0057">Aromatic amino acid biosynthesis</keyword>
<keyword id="KW-0210">Decarboxylase</keyword>
<keyword id="KW-0456">Lyase</keyword>
<keyword id="KW-1185">Reference proteome</keyword>
<keyword id="KW-0822">Tryptophan biosynthesis</keyword>
<reference key="1">
    <citation type="submission" date="2007-11" db="EMBL/GenBank/DDBJ databases">
        <title>Complete genome sequence of Clostridium phytofermentans ISDg.</title>
        <authorList>
            <person name="Leschine S.B."/>
            <person name="Warnick T.A."/>
            <person name="Blanchard J.L."/>
            <person name="Schnell D.J."/>
            <person name="Petit E.L."/>
            <person name="LaTouf W.G."/>
            <person name="Copeland A."/>
            <person name="Lucas S."/>
            <person name="Lapidus A."/>
            <person name="Barry K."/>
            <person name="Glavina del Rio T."/>
            <person name="Dalin E."/>
            <person name="Tice H."/>
            <person name="Pitluck S."/>
            <person name="Kiss H."/>
            <person name="Brettin T."/>
            <person name="Bruce D."/>
            <person name="Detter J.C."/>
            <person name="Han C."/>
            <person name="Kuske C."/>
            <person name="Schmutz J."/>
            <person name="Larimer F."/>
            <person name="Land M."/>
            <person name="Hauser L."/>
            <person name="Kyrpides N."/>
            <person name="Kim E.A."/>
            <person name="Richardson P."/>
        </authorList>
    </citation>
    <scope>NUCLEOTIDE SEQUENCE [LARGE SCALE GENOMIC DNA]</scope>
    <source>
        <strain>ATCC 700394 / DSM 18823 / ISDg</strain>
    </source>
</reference>
<gene>
    <name evidence="1" type="primary">trpC</name>
    <name type="ordered locus">Cphy_3845</name>
</gene>
<name>TRPC_LACP7</name>
<proteinExistence type="inferred from homology"/>
<feature type="chain" id="PRO_1000076417" description="Indole-3-glycerol phosphate synthase">
    <location>
        <begin position="1"/>
        <end position="271"/>
    </location>
</feature>
<accession>A9KL43</accession>